<feature type="chain" id="PRO_1000191817" description="Transcriptional repressor NrdR">
    <location>
        <begin position="1"/>
        <end position="157"/>
    </location>
</feature>
<feature type="domain" description="ATP-cone" evidence="1">
    <location>
        <begin position="49"/>
        <end position="139"/>
    </location>
</feature>
<feature type="zinc finger region" evidence="1">
    <location>
        <begin position="3"/>
        <end position="34"/>
    </location>
</feature>
<feature type="region of interest" description="Disordered" evidence="2">
    <location>
        <begin position="1"/>
        <end position="22"/>
    </location>
</feature>
<gene>
    <name evidence="1" type="primary">nrdR</name>
    <name type="ordered locus">SPH_1821</name>
</gene>
<proteinExistence type="inferred from homology"/>
<protein>
    <recommendedName>
        <fullName evidence="1">Transcriptional repressor NrdR</fullName>
    </recommendedName>
</protein>
<reference key="1">
    <citation type="journal article" date="2010" name="Genome Biol.">
        <title>Structure and dynamics of the pan-genome of Streptococcus pneumoniae and closely related species.</title>
        <authorList>
            <person name="Donati C."/>
            <person name="Hiller N.L."/>
            <person name="Tettelin H."/>
            <person name="Muzzi A."/>
            <person name="Croucher N.J."/>
            <person name="Angiuoli S.V."/>
            <person name="Oggioni M."/>
            <person name="Dunning Hotopp J.C."/>
            <person name="Hu F.Z."/>
            <person name="Riley D.R."/>
            <person name="Covacci A."/>
            <person name="Mitchell T.J."/>
            <person name="Bentley S.D."/>
            <person name="Kilian M."/>
            <person name="Ehrlich G.D."/>
            <person name="Rappuoli R."/>
            <person name="Moxon E.R."/>
            <person name="Masignani V."/>
        </authorList>
    </citation>
    <scope>NUCLEOTIDE SEQUENCE [LARGE SCALE GENOMIC DNA]</scope>
    <source>
        <strain>Hungary19A-6</strain>
    </source>
</reference>
<keyword id="KW-0067">ATP-binding</keyword>
<keyword id="KW-0238">DNA-binding</keyword>
<keyword id="KW-0479">Metal-binding</keyword>
<keyword id="KW-0547">Nucleotide-binding</keyword>
<keyword id="KW-0678">Repressor</keyword>
<keyword id="KW-0804">Transcription</keyword>
<keyword id="KW-0805">Transcription regulation</keyword>
<keyword id="KW-0862">Zinc</keyword>
<keyword id="KW-0863">Zinc-finger</keyword>
<organism>
    <name type="scientific">Streptococcus pneumoniae (strain Hungary19A-6)</name>
    <dbReference type="NCBI Taxonomy" id="487214"/>
    <lineage>
        <taxon>Bacteria</taxon>
        <taxon>Bacillati</taxon>
        <taxon>Bacillota</taxon>
        <taxon>Bacilli</taxon>
        <taxon>Lactobacillales</taxon>
        <taxon>Streptococcaceae</taxon>
        <taxon>Streptococcus</taxon>
    </lineage>
</organism>
<dbReference type="EMBL" id="CP000936">
    <property type="protein sequence ID" value="ACA37358.1"/>
    <property type="molecule type" value="Genomic_DNA"/>
</dbReference>
<dbReference type="RefSeq" id="WP_001203672.1">
    <property type="nucleotide sequence ID" value="NC_010380.1"/>
</dbReference>
<dbReference type="SMR" id="B1I770"/>
<dbReference type="GeneID" id="93740109"/>
<dbReference type="KEGG" id="spv:SPH_1821"/>
<dbReference type="HOGENOM" id="CLU_108412_0_0_9"/>
<dbReference type="Proteomes" id="UP000002163">
    <property type="component" value="Chromosome"/>
</dbReference>
<dbReference type="GO" id="GO:0005524">
    <property type="term" value="F:ATP binding"/>
    <property type="evidence" value="ECO:0007669"/>
    <property type="project" value="UniProtKB-KW"/>
</dbReference>
<dbReference type="GO" id="GO:0003677">
    <property type="term" value="F:DNA binding"/>
    <property type="evidence" value="ECO:0007669"/>
    <property type="project" value="UniProtKB-KW"/>
</dbReference>
<dbReference type="GO" id="GO:0008270">
    <property type="term" value="F:zinc ion binding"/>
    <property type="evidence" value="ECO:0007669"/>
    <property type="project" value="UniProtKB-UniRule"/>
</dbReference>
<dbReference type="GO" id="GO:0045892">
    <property type="term" value="P:negative regulation of DNA-templated transcription"/>
    <property type="evidence" value="ECO:0007669"/>
    <property type="project" value="UniProtKB-UniRule"/>
</dbReference>
<dbReference type="HAMAP" id="MF_00440">
    <property type="entry name" value="NrdR"/>
    <property type="match status" value="1"/>
</dbReference>
<dbReference type="InterPro" id="IPR005144">
    <property type="entry name" value="ATP-cone_dom"/>
</dbReference>
<dbReference type="InterPro" id="IPR055173">
    <property type="entry name" value="NrdR-like_N"/>
</dbReference>
<dbReference type="InterPro" id="IPR003796">
    <property type="entry name" value="RNR_NrdR-like"/>
</dbReference>
<dbReference type="NCBIfam" id="TIGR00244">
    <property type="entry name" value="transcriptional regulator NrdR"/>
    <property type="match status" value="1"/>
</dbReference>
<dbReference type="PANTHER" id="PTHR30455">
    <property type="entry name" value="TRANSCRIPTIONAL REPRESSOR NRDR"/>
    <property type="match status" value="1"/>
</dbReference>
<dbReference type="PANTHER" id="PTHR30455:SF2">
    <property type="entry name" value="TRANSCRIPTIONAL REPRESSOR NRDR"/>
    <property type="match status" value="1"/>
</dbReference>
<dbReference type="Pfam" id="PF03477">
    <property type="entry name" value="ATP-cone"/>
    <property type="match status" value="1"/>
</dbReference>
<dbReference type="Pfam" id="PF22811">
    <property type="entry name" value="Zn_ribbon_NrdR"/>
    <property type="match status" value="1"/>
</dbReference>
<dbReference type="PROSITE" id="PS51161">
    <property type="entry name" value="ATP_CONE"/>
    <property type="match status" value="1"/>
</dbReference>
<name>NRDR_STRPI</name>
<comment type="function">
    <text evidence="1">Negatively regulates transcription of bacterial ribonucleotide reductase nrd genes and operons by binding to NrdR-boxes.</text>
</comment>
<comment type="cofactor">
    <cofactor evidence="1">
        <name>Zn(2+)</name>
        <dbReference type="ChEBI" id="CHEBI:29105"/>
    </cofactor>
    <text evidence="1">Binds 1 zinc ion.</text>
</comment>
<comment type="similarity">
    <text evidence="1">Belongs to the NrdR family.</text>
</comment>
<evidence type="ECO:0000255" key="1">
    <source>
        <dbReference type="HAMAP-Rule" id="MF_00440"/>
    </source>
</evidence>
<evidence type="ECO:0000256" key="2">
    <source>
        <dbReference type="SAM" id="MobiDB-lite"/>
    </source>
</evidence>
<accession>B1I770</accession>
<sequence length="157" mass="18380">MRCPKCGATKSSVIDSRQAEEGNTIRRRRECDECQHRFTTYERVEERTLVVVKKDGTREQFSRDKIFNGIIRSAQKRPVSSDEINMVVNRIEQKLRGRNENEIQSEDIGSLVMEELAELDEITYVRFASVYRSFKDVSELESLLQQITQSSKKKKER</sequence>